<name>RBL_TETOB</name>
<feature type="propeptide" id="PRO_0000251436" evidence="1">
    <location>
        <begin position="1"/>
        <end position="2"/>
    </location>
</feature>
<feature type="chain" id="PRO_0000251437" description="Ribulose bisphosphate carboxylase large chain">
    <location>
        <begin position="3"/>
        <end position="475"/>
    </location>
</feature>
<feature type="active site" description="Proton acceptor" evidence="1">
    <location>
        <position position="175"/>
    </location>
</feature>
<feature type="active site" description="Proton acceptor" evidence="1">
    <location>
        <position position="294"/>
    </location>
</feature>
<feature type="binding site" description="in homodimeric partner" evidence="1">
    <location>
        <position position="123"/>
    </location>
    <ligand>
        <name>substrate</name>
    </ligand>
</feature>
<feature type="binding site" evidence="1">
    <location>
        <position position="173"/>
    </location>
    <ligand>
        <name>substrate</name>
    </ligand>
</feature>
<feature type="binding site" evidence="1">
    <location>
        <position position="177"/>
    </location>
    <ligand>
        <name>substrate</name>
    </ligand>
</feature>
<feature type="binding site" description="via carbamate group" evidence="1">
    <location>
        <position position="201"/>
    </location>
    <ligand>
        <name>Mg(2+)</name>
        <dbReference type="ChEBI" id="CHEBI:18420"/>
    </ligand>
</feature>
<feature type="binding site" evidence="1">
    <location>
        <position position="203"/>
    </location>
    <ligand>
        <name>Mg(2+)</name>
        <dbReference type="ChEBI" id="CHEBI:18420"/>
    </ligand>
</feature>
<feature type="binding site" evidence="1">
    <location>
        <position position="204"/>
    </location>
    <ligand>
        <name>Mg(2+)</name>
        <dbReference type="ChEBI" id="CHEBI:18420"/>
    </ligand>
</feature>
<feature type="binding site" evidence="1">
    <location>
        <position position="295"/>
    </location>
    <ligand>
        <name>substrate</name>
    </ligand>
</feature>
<feature type="binding site" evidence="1">
    <location>
        <position position="327"/>
    </location>
    <ligand>
        <name>substrate</name>
    </ligand>
</feature>
<feature type="binding site" evidence="1">
    <location>
        <position position="379"/>
    </location>
    <ligand>
        <name>substrate</name>
    </ligand>
</feature>
<feature type="site" description="Transition state stabilizer" evidence="1">
    <location>
        <position position="334"/>
    </location>
</feature>
<feature type="modified residue" description="N-acetylproline" evidence="1">
    <location>
        <position position="3"/>
    </location>
</feature>
<feature type="modified residue" description="N6,N6,N6-trimethyllysine" evidence="1">
    <location>
        <position position="14"/>
    </location>
</feature>
<feature type="modified residue" description="N6-carboxylysine" evidence="1">
    <location>
        <position position="201"/>
    </location>
</feature>
<feature type="disulfide bond" description="Interchain; in linked form" evidence="1">
    <location>
        <position position="247"/>
    </location>
</feature>
<reference key="1">
    <citation type="journal article" date="2006" name="BMC Evol. Biol.">
        <title>The complete chloroplast genome sequence of the chlorophycean green alga Scenedesmus obliquus reveals a compact gene organization and a biased distribution of genes on the two DNA strands.</title>
        <authorList>
            <person name="de Cambiaire J.-C."/>
            <person name="Otis C."/>
            <person name="Lemieux C."/>
            <person name="Turmel M."/>
        </authorList>
    </citation>
    <scope>NUCLEOTIDE SEQUENCE [LARGE SCALE GENOMIC DNA]</scope>
    <source>
        <strain>UTEX 393</strain>
    </source>
</reference>
<protein>
    <recommendedName>
        <fullName evidence="1">Ribulose bisphosphate carboxylase large chain</fullName>
        <shortName evidence="1">RuBisCO large subunit</shortName>
        <ecNumber evidence="1">4.1.1.39</ecNumber>
    </recommendedName>
</protein>
<keyword id="KW-0007">Acetylation</keyword>
<keyword id="KW-0113">Calvin cycle</keyword>
<keyword id="KW-0120">Carbon dioxide fixation</keyword>
<keyword id="KW-0150">Chloroplast</keyword>
<keyword id="KW-1015">Disulfide bond</keyword>
<keyword id="KW-0456">Lyase</keyword>
<keyword id="KW-0460">Magnesium</keyword>
<keyword id="KW-0479">Metal-binding</keyword>
<keyword id="KW-0488">Methylation</keyword>
<keyword id="KW-0503">Monooxygenase</keyword>
<keyword id="KW-0560">Oxidoreductase</keyword>
<keyword id="KW-0601">Photorespiration</keyword>
<keyword id="KW-0602">Photosynthesis</keyword>
<keyword id="KW-0934">Plastid</keyword>
<accession>Q1KVV0</accession>
<comment type="function">
    <text evidence="1">RuBisCO catalyzes two reactions: the carboxylation of D-ribulose 1,5-bisphosphate, the primary event in carbon dioxide fixation, as well as the oxidative fragmentation of the pentose substrate in the photorespiration process. Both reactions occur simultaneously and in competition at the same active site.</text>
</comment>
<comment type="catalytic activity">
    <reaction evidence="1">
        <text>2 (2R)-3-phosphoglycerate + 2 H(+) = D-ribulose 1,5-bisphosphate + CO2 + H2O</text>
        <dbReference type="Rhea" id="RHEA:23124"/>
        <dbReference type="ChEBI" id="CHEBI:15377"/>
        <dbReference type="ChEBI" id="CHEBI:15378"/>
        <dbReference type="ChEBI" id="CHEBI:16526"/>
        <dbReference type="ChEBI" id="CHEBI:57870"/>
        <dbReference type="ChEBI" id="CHEBI:58272"/>
        <dbReference type="EC" id="4.1.1.39"/>
    </reaction>
</comment>
<comment type="catalytic activity">
    <reaction evidence="1">
        <text>D-ribulose 1,5-bisphosphate + O2 = 2-phosphoglycolate + (2R)-3-phosphoglycerate + 2 H(+)</text>
        <dbReference type="Rhea" id="RHEA:36631"/>
        <dbReference type="ChEBI" id="CHEBI:15378"/>
        <dbReference type="ChEBI" id="CHEBI:15379"/>
        <dbReference type="ChEBI" id="CHEBI:57870"/>
        <dbReference type="ChEBI" id="CHEBI:58033"/>
        <dbReference type="ChEBI" id="CHEBI:58272"/>
    </reaction>
</comment>
<comment type="cofactor">
    <cofactor evidence="1">
        <name>Mg(2+)</name>
        <dbReference type="ChEBI" id="CHEBI:18420"/>
    </cofactor>
    <text evidence="1">Binds 1 Mg(2+) ion per subunit.</text>
</comment>
<comment type="subunit">
    <text evidence="1">Heterohexadecamer of 8 large chains and 8 small chains; disulfide-linked. The disulfide link is formed within the large subunit homodimers.</text>
</comment>
<comment type="subcellular location">
    <subcellularLocation>
        <location>Plastid</location>
        <location>Chloroplast</location>
    </subcellularLocation>
</comment>
<comment type="PTM">
    <text evidence="1">The disulfide bond which can form in the large chain dimeric partners within the hexadecamer appears to be associated with oxidative stress and protein turnover.</text>
</comment>
<comment type="miscellaneous">
    <text evidence="1">The basic functional RuBisCO is composed of a large chain homodimer in a 'head-to-tail' conformation. In form I RuBisCO this homodimer is arranged in a barrel-like tetramer with the small subunits forming a tetrameric 'cap' on each end of the 'barrel'.</text>
</comment>
<comment type="similarity">
    <text evidence="1">Belongs to the RuBisCO large chain family. Type I subfamily.</text>
</comment>
<dbReference type="EC" id="4.1.1.39" evidence="1"/>
<dbReference type="EMBL" id="DQ396875">
    <property type="protein sequence ID" value="ABD48257.1"/>
    <property type="molecule type" value="Genomic_DNA"/>
</dbReference>
<dbReference type="RefSeq" id="YP_635974.1">
    <property type="nucleotide sequence ID" value="NC_008101.1"/>
</dbReference>
<dbReference type="SMR" id="Q1KVV0"/>
<dbReference type="GeneID" id="4099835"/>
<dbReference type="GO" id="GO:0009507">
    <property type="term" value="C:chloroplast"/>
    <property type="evidence" value="ECO:0007669"/>
    <property type="project" value="UniProtKB-SubCell"/>
</dbReference>
<dbReference type="GO" id="GO:0000287">
    <property type="term" value="F:magnesium ion binding"/>
    <property type="evidence" value="ECO:0007669"/>
    <property type="project" value="UniProtKB-UniRule"/>
</dbReference>
<dbReference type="GO" id="GO:0004497">
    <property type="term" value="F:monooxygenase activity"/>
    <property type="evidence" value="ECO:0007669"/>
    <property type="project" value="UniProtKB-KW"/>
</dbReference>
<dbReference type="GO" id="GO:0016984">
    <property type="term" value="F:ribulose-bisphosphate carboxylase activity"/>
    <property type="evidence" value="ECO:0007669"/>
    <property type="project" value="UniProtKB-UniRule"/>
</dbReference>
<dbReference type="GO" id="GO:0009853">
    <property type="term" value="P:photorespiration"/>
    <property type="evidence" value="ECO:0007669"/>
    <property type="project" value="UniProtKB-KW"/>
</dbReference>
<dbReference type="GO" id="GO:0019253">
    <property type="term" value="P:reductive pentose-phosphate cycle"/>
    <property type="evidence" value="ECO:0007669"/>
    <property type="project" value="UniProtKB-UniRule"/>
</dbReference>
<dbReference type="CDD" id="cd08212">
    <property type="entry name" value="RuBisCO_large_I"/>
    <property type="match status" value="1"/>
</dbReference>
<dbReference type="FunFam" id="3.30.70.150:FF:000001">
    <property type="entry name" value="Ribulose bisphosphate carboxylase large chain"/>
    <property type="match status" value="1"/>
</dbReference>
<dbReference type="Gene3D" id="3.20.20.110">
    <property type="entry name" value="Ribulose bisphosphate carboxylase, large subunit, C-terminal domain"/>
    <property type="match status" value="1"/>
</dbReference>
<dbReference type="Gene3D" id="3.30.70.150">
    <property type="entry name" value="RuBisCO large subunit, N-terminal domain"/>
    <property type="match status" value="1"/>
</dbReference>
<dbReference type="HAMAP" id="MF_01338">
    <property type="entry name" value="RuBisCO_L_type1"/>
    <property type="match status" value="1"/>
</dbReference>
<dbReference type="InterPro" id="IPR033966">
    <property type="entry name" value="RuBisCO"/>
</dbReference>
<dbReference type="InterPro" id="IPR020878">
    <property type="entry name" value="RuBisCo_large_chain_AS"/>
</dbReference>
<dbReference type="InterPro" id="IPR000685">
    <property type="entry name" value="RuBisCO_lsu_C"/>
</dbReference>
<dbReference type="InterPro" id="IPR036376">
    <property type="entry name" value="RuBisCO_lsu_C_sf"/>
</dbReference>
<dbReference type="InterPro" id="IPR017443">
    <property type="entry name" value="RuBisCO_lsu_fd_N"/>
</dbReference>
<dbReference type="InterPro" id="IPR036422">
    <property type="entry name" value="RuBisCO_lsu_N_sf"/>
</dbReference>
<dbReference type="InterPro" id="IPR020888">
    <property type="entry name" value="RuBisCO_lsuI"/>
</dbReference>
<dbReference type="NCBIfam" id="NF003252">
    <property type="entry name" value="PRK04208.1"/>
    <property type="match status" value="1"/>
</dbReference>
<dbReference type="PANTHER" id="PTHR42704">
    <property type="entry name" value="RIBULOSE BISPHOSPHATE CARBOXYLASE"/>
    <property type="match status" value="1"/>
</dbReference>
<dbReference type="PANTHER" id="PTHR42704:SF17">
    <property type="entry name" value="RIBULOSE BISPHOSPHATE CARBOXYLASE LARGE CHAIN"/>
    <property type="match status" value="1"/>
</dbReference>
<dbReference type="Pfam" id="PF00016">
    <property type="entry name" value="RuBisCO_large"/>
    <property type="match status" value="1"/>
</dbReference>
<dbReference type="Pfam" id="PF02788">
    <property type="entry name" value="RuBisCO_large_N"/>
    <property type="match status" value="1"/>
</dbReference>
<dbReference type="SFLD" id="SFLDG01052">
    <property type="entry name" value="RuBisCO"/>
    <property type="match status" value="1"/>
</dbReference>
<dbReference type="SFLD" id="SFLDS00014">
    <property type="entry name" value="RuBisCO"/>
    <property type="match status" value="1"/>
</dbReference>
<dbReference type="SFLD" id="SFLDG00301">
    <property type="entry name" value="RuBisCO-like_proteins"/>
    <property type="match status" value="1"/>
</dbReference>
<dbReference type="SUPFAM" id="SSF51649">
    <property type="entry name" value="RuBisCo, C-terminal domain"/>
    <property type="match status" value="1"/>
</dbReference>
<dbReference type="SUPFAM" id="SSF54966">
    <property type="entry name" value="RuBisCO, large subunit, small (N-terminal) domain"/>
    <property type="match status" value="1"/>
</dbReference>
<dbReference type="PROSITE" id="PS00157">
    <property type="entry name" value="RUBISCO_LARGE"/>
    <property type="match status" value="1"/>
</dbReference>
<geneLocation type="chloroplast"/>
<gene>
    <name evidence="1" type="primary">rbcL</name>
</gene>
<evidence type="ECO:0000255" key="1">
    <source>
        <dbReference type="HAMAP-Rule" id="MF_01338"/>
    </source>
</evidence>
<proteinExistence type="inferred from homology"/>
<organism>
    <name type="scientific">Tetradesmus obliquus</name>
    <name type="common">Green alga</name>
    <name type="synonym">Acutodesmus obliquus</name>
    <dbReference type="NCBI Taxonomy" id="3088"/>
    <lineage>
        <taxon>Eukaryota</taxon>
        <taxon>Viridiplantae</taxon>
        <taxon>Chlorophyta</taxon>
        <taxon>core chlorophytes</taxon>
        <taxon>Chlorophyceae</taxon>
        <taxon>CS clade</taxon>
        <taxon>Sphaeropleales</taxon>
        <taxon>Scenedesmaceae</taxon>
        <taxon>Tetradesmus</taxon>
    </lineage>
</organism>
<sequence length="475" mass="52608">MVPQTETRAGAGFKAGVKDYRLTYYTPDYVVKDTDILAAFRMTPQPGVPPEECGAAVAAESSTGTWTTVWTDGLTTLDRYKGRCYDIEPVPGEDNQYIAYVAYPIDLFEEGSVTNLFTSIVGNVFGFKALRALRLEDLRIPPAYVKTFQGPPHGIQVERDKLNKYGRGLLGCTIKPKLGLSAKNYGRAVYECLRGGLDFTKDDENVNSQPFMRWRDRFLFVAEATYKAQSETGEIKGHYLNATAATCEEMLKRAQCAKELGVPIIMHDYLTGGFTANTSLSSYCRDHGLLLHIHRAMHAVIDRQRNHGIHFRVLAKALRLSGGDHLHSGTVVGKLEGEREVTLGFVDLMRDDYIEKDRSRGIYFTQDWCSMGGTMPVASGGIHVWHMPALVEIFGDDACLQFGGGTLGHPWGNAPGAVANRVALEACTQARNEGRDLAREGGDVIRSACKWSPELAAACEVWKEIKFEFETIDKL</sequence>